<gene>
    <name evidence="7" type="primary">Mterf1b</name>
    <name evidence="7" type="synonym">Gm9897</name>
    <name type="synonym">Mterf</name>
    <name type="synonym">Mterf1</name>
</gene>
<organism>
    <name type="scientific">Mus musculus</name>
    <name type="common">Mouse</name>
    <dbReference type="NCBI Taxonomy" id="10090"/>
    <lineage>
        <taxon>Eukaryota</taxon>
        <taxon>Metazoa</taxon>
        <taxon>Chordata</taxon>
        <taxon>Craniata</taxon>
        <taxon>Vertebrata</taxon>
        <taxon>Euteleostomi</taxon>
        <taxon>Mammalia</taxon>
        <taxon>Eutheria</taxon>
        <taxon>Euarchontoglires</taxon>
        <taxon>Glires</taxon>
        <taxon>Rodentia</taxon>
        <taxon>Myomorpha</taxon>
        <taxon>Muroidea</taxon>
        <taxon>Muridae</taxon>
        <taxon>Murinae</taxon>
        <taxon>Mus</taxon>
        <taxon>Mus</taxon>
    </lineage>
</organism>
<dbReference type="EMBL" id="AC068609">
    <property type="status" value="NOT_ANNOTATED_CDS"/>
    <property type="molecule type" value="Genomic_DNA"/>
</dbReference>
<dbReference type="EMBL" id="CH466600">
    <property type="protein sequence ID" value="EDL14630.1"/>
    <property type="molecule type" value="Genomic_DNA"/>
</dbReference>
<dbReference type="EMBL" id="CH466600">
    <property type="protein sequence ID" value="EDL14631.1"/>
    <property type="molecule type" value="Genomic_DNA"/>
</dbReference>
<dbReference type="EMBL" id="BC141337">
    <property type="protein sequence ID" value="AAI41338.1"/>
    <property type="molecule type" value="mRNA"/>
</dbReference>
<dbReference type="CCDS" id="CCDS39004.2"/>
<dbReference type="RefSeq" id="NP_001036135.3">
    <property type="nucleotide sequence ID" value="NM_001042670.2"/>
</dbReference>
<dbReference type="SMR" id="B9EJ57"/>
<dbReference type="BioGRID" id="228990">
    <property type="interactions" value="2"/>
</dbReference>
<dbReference type="FunCoup" id="B9EJ57">
    <property type="interactions" value="1395"/>
</dbReference>
<dbReference type="STRING" id="10090.ENSMUSP00000135408"/>
<dbReference type="PaxDb" id="10090-ENSMUSP00000135408"/>
<dbReference type="PeptideAtlas" id="B9EJ57"/>
<dbReference type="ProteomicsDB" id="290213"/>
<dbReference type="Pumba" id="B9EJ57"/>
<dbReference type="Ensembl" id="ENSMUST00000177258.3">
    <property type="protein sequence ID" value="ENSMUSP00000135408.3"/>
    <property type="gene ID" value="ENSMUSG00000053178.6"/>
</dbReference>
<dbReference type="GeneID" id="208595"/>
<dbReference type="KEGG" id="mmu:208595"/>
<dbReference type="AGR" id="MGI:3704243"/>
<dbReference type="CTD" id="208595"/>
<dbReference type="MGI" id="MGI:3704243">
    <property type="gene designation" value="Mterf1b"/>
</dbReference>
<dbReference type="eggNOG" id="KOG1267">
    <property type="taxonomic scope" value="Eukaryota"/>
</dbReference>
<dbReference type="GeneTree" id="ENSGT00530000063817"/>
<dbReference type="InParanoid" id="B9EJ57"/>
<dbReference type="OrthoDB" id="637682at2759"/>
<dbReference type="PhylomeDB" id="B9EJ57"/>
<dbReference type="Reactome" id="R-MMU-163316">
    <property type="pathway name" value="Mitochondrial transcription termination"/>
</dbReference>
<dbReference type="BioGRID-ORCS" id="208595">
    <property type="hits" value="6 hits in 44 CRISPR screens"/>
</dbReference>
<dbReference type="ChiTaRS" id="Mterf1a">
    <property type="organism name" value="mouse"/>
</dbReference>
<dbReference type="PRO" id="PR:B9EJ57"/>
<dbReference type="Proteomes" id="UP000000589">
    <property type="component" value="Chromosome 5"/>
</dbReference>
<dbReference type="RNAct" id="B9EJ57">
    <property type="molecule type" value="protein"/>
</dbReference>
<dbReference type="GO" id="GO:0005739">
    <property type="term" value="C:mitochondrion"/>
    <property type="evidence" value="ECO:0007005"/>
    <property type="project" value="MGI"/>
</dbReference>
<dbReference type="GO" id="GO:0003690">
    <property type="term" value="F:double-stranded DNA binding"/>
    <property type="evidence" value="ECO:0007669"/>
    <property type="project" value="InterPro"/>
</dbReference>
<dbReference type="GO" id="GO:0043565">
    <property type="term" value="F:sequence-specific DNA binding"/>
    <property type="evidence" value="ECO:0000314"/>
    <property type="project" value="MGI"/>
</dbReference>
<dbReference type="GO" id="GO:0006353">
    <property type="term" value="P:DNA-templated transcription termination"/>
    <property type="evidence" value="ECO:0007669"/>
    <property type="project" value="UniProtKB-KW"/>
</dbReference>
<dbReference type="GO" id="GO:0006355">
    <property type="term" value="P:regulation of DNA-templated transcription"/>
    <property type="evidence" value="ECO:0007669"/>
    <property type="project" value="InterPro"/>
</dbReference>
<dbReference type="GO" id="GO:0006391">
    <property type="term" value="P:transcription initiation at mitochondrial promoter"/>
    <property type="evidence" value="ECO:0000314"/>
    <property type="project" value="MGI"/>
</dbReference>
<dbReference type="FunFam" id="1.25.70.10:FF:000007">
    <property type="entry name" value="Mitochondrial transcription termination factor 1"/>
    <property type="match status" value="1"/>
</dbReference>
<dbReference type="FunFam" id="1.25.70.10:FF:000003">
    <property type="entry name" value="transcription termination factor 2, mitochondrial"/>
    <property type="match status" value="1"/>
</dbReference>
<dbReference type="Gene3D" id="1.25.70.10">
    <property type="entry name" value="Transcription termination factor 3, mitochondrial"/>
    <property type="match status" value="2"/>
</dbReference>
<dbReference type="InterPro" id="IPR003690">
    <property type="entry name" value="MTERF"/>
</dbReference>
<dbReference type="InterPro" id="IPR038538">
    <property type="entry name" value="MTERF_sf"/>
</dbReference>
<dbReference type="PANTHER" id="PTHR15437:SF2">
    <property type="entry name" value="TRANSCRIPTION TERMINATION FACTOR 1, MITOCHONDRIAL"/>
    <property type="match status" value="1"/>
</dbReference>
<dbReference type="PANTHER" id="PTHR15437">
    <property type="entry name" value="TRANSCRIPTION TERMINATION FACTOR, MITOCHONDRIAL"/>
    <property type="match status" value="1"/>
</dbReference>
<dbReference type="Pfam" id="PF02536">
    <property type="entry name" value="mTERF"/>
    <property type="match status" value="1"/>
</dbReference>
<dbReference type="SMART" id="SM00733">
    <property type="entry name" value="Mterf"/>
    <property type="match status" value="6"/>
</dbReference>
<accession>B9EJ57</accession>
<accession>L7N482</accession>
<proteinExistence type="evidence at transcript level"/>
<name>MTF1B_MOUSE</name>
<protein>
    <recommendedName>
        <fullName>Transcription termination factor 1b, mitochondrial</fullName>
    </recommendedName>
    <alternativeName>
        <fullName evidence="7">Mitochondrial transcription termination factor 1b</fullName>
        <shortName>mTERF1b</shortName>
    </alternativeName>
</protein>
<comment type="function">
    <text evidence="3">Transcription termination factor. Binds to a 28 bp region within the tRNA(Leu(uur)) gene at a position immediately adjacent to and downstream of the 16S rRNA gene; this region comprises a tridecamer sequence critical for directing accurate termination. Binds DNA along the major grove and promotes DNA bending and partial unwinding. Promotes base flipping. Transcription termination activity appears to be polarized with highest specificity for transcripts initiated on the light strand.</text>
</comment>
<comment type="subunit">
    <text evidence="1">Monomer.</text>
</comment>
<comment type="subcellular location">
    <subcellularLocation>
        <location evidence="1">Mitochondrion</location>
    </subcellularLocation>
</comment>
<comment type="tissue specificity">
    <text evidence="3">Expressed strongly in the heart and at lower levels in brain, liver and kidney.</text>
</comment>
<comment type="domain">
    <text evidence="1">Contains nine structural repeats of about 35 residues, where each repeat contains three helices. The repeats form a left-handed superhelical assembly with a solenoid structure that wraps itself around DNA (By similarity).</text>
</comment>
<comment type="PTM">
    <text evidence="1">Phosphoprotein with mostly four phosphate groups. While the DNA-binding activity is unaffected by the phosphorylation state, only the phosphorylated form of the protein is active for termination activity. Functioning seems to be regulated by phosphorylation (By similarity).</text>
</comment>
<comment type="disruption phenotype">
    <text evidence="3">Double knockout of Mterf1a and Mterf1b results in viable animals with no gross phenotype, and normal oxidative phosphorylation capacity. Steady-state mitochondrial DNA levels are normal. There are subtle effects on levels of mitochondrial transcripts: transcripts initiated at the light strand promoter and also situated downstream of the MTERF binding site are increased, levels of 7S RNA are reduced, while levels of other mitochondrial transcripts appear normal.</text>
</comment>
<comment type="similarity">
    <text evidence="2">Belongs to the mTERF family.</text>
</comment>
<keyword id="KW-0238">DNA-binding</keyword>
<keyword id="KW-0496">Mitochondrion</keyword>
<keyword id="KW-0597">Phosphoprotein</keyword>
<keyword id="KW-1185">Reference proteome</keyword>
<keyword id="KW-0677">Repeat</keyword>
<keyword id="KW-0804">Transcription</keyword>
<keyword id="KW-0805">Transcription regulation</keyword>
<keyword id="KW-0806">Transcription termination</keyword>
<keyword id="KW-0809">Transit peptide</keyword>
<sequence>MASRNIWCVRRNFLFDLRGWMLQYSAEVFLKSISFRTFSVECDSKDKESLEEEREDLLSNLVTMGVDIDMARRRQPGVFNKAVTNEQELKIFLLSKGASDKVIGSIISRYPRAITRTPESLSKRWDLWRKIMASDLEIVNILERSPESFFRSNNNLNLENNIKFLCSVGLTHKCLCRLLTNAPRTFSNSLNLNKQMVEFLQETGMSLGHNDPRDFVRKIISKNPSILIQSTKRVKTNIEFLQSTFNLNKQDLLLLICGPGARILDLSNDCTKKNYTNIRERLLSLGCSEEEVQRFVLSYLNMVFLSEKKFNDKIDCLIEEKISASQIIENPRILDSSINTLKTRIRELSHAGYDLSTSSIALLSWSQRRYEAKLKRLCG</sequence>
<feature type="transit peptide" description="Mitochondrion" evidence="2">
    <location>
        <begin position="1"/>
        <end position="37"/>
    </location>
</feature>
<feature type="chain" id="PRO_0000430152" description="Transcription termination factor 1b, mitochondrial" evidence="2">
    <location>
        <begin position="38"/>
        <end position="379"/>
    </location>
</feature>
<feature type="region of interest" description="Interaction with DNA" evidence="1">
    <location>
        <begin position="151"/>
        <end position="152"/>
    </location>
</feature>
<feature type="region of interest" description="Interaction with DNA" evidence="1">
    <location>
        <begin position="229"/>
        <end position="233"/>
    </location>
</feature>
<feature type="region of interest" description="Interaction with DNA" evidence="1">
    <location>
        <begin position="306"/>
        <end position="313"/>
    </location>
</feature>
<feature type="region of interest" description="Interaction with DNA" evidence="1">
    <location>
        <begin position="337"/>
        <end position="340"/>
    </location>
</feature>
<feature type="region of interest" description="Interaction with DNA" evidence="1">
    <location>
        <begin position="366"/>
        <end position="373"/>
    </location>
</feature>
<feature type="site" description="Interaction with DNA" evidence="1">
    <location>
        <position position="144"/>
    </location>
</feature>
<feature type="site" description="Interaction with DNA" evidence="1">
    <location>
        <position position="184"/>
    </location>
</feature>
<feature type="site" description="Interaction with DNA" evidence="1">
    <location>
        <position position="332"/>
    </location>
</feature>
<evidence type="ECO:0000250" key="1">
    <source>
        <dbReference type="UniProtKB" id="Q99551"/>
    </source>
</evidence>
<evidence type="ECO:0000255" key="2"/>
<evidence type="ECO:0000269" key="3">
    <source>
    </source>
</evidence>
<evidence type="ECO:0000305" key="4"/>
<evidence type="ECO:0000312" key="5">
    <source>
        <dbReference type="EMBL" id="AAI41338.1"/>
    </source>
</evidence>
<evidence type="ECO:0000312" key="6">
    <source>
        <dbReference type="EMBL" id="EDL14630.1"/>
    </source>
</evidence>
<evidence type="ECO:0000312" key="7">
    <source>
        <dbReference type="MGI" id="MGI:3704243"/>
    </source>
</evidence>
<reference key="1">
    <citation type="journal article" date="2009" name="PLoS Biol.">
        <title>Lineage-specific biology revealed by a finished genome assembly of the mouse.</title>
        <authorList>
            <person name="Church D.M."/>
            <person name="Goodstadt L."/>
            <person name="Hillier L.W."/>
            <person name="Zody M.C."/>
            <person name="Goldstein S."/>
            <person name="She X."/>
            <person name="Bult C.J."/>
            <person name="Agarwala R."/>
            <person name="Cherry J.L."/>
            <person name="DiCuccio M."/>
            <person name="Hlavina W."/>
            <person name="Kapustin Y."/>
            <person name="Meric P."/>
            <person name="Maglott D."/>
            <person name="Birtle Z."/>
            <person name="Marques A.C."/>
            <person name="Graves T."/>
            <person name="Zhou S."/>
            <person name="Teague B."/>
            <person name="Potamousis K."/>
            <person name="Churas C."/>
            <person name="Place M."/>
            <person name="Herschleb J."/>
            <person name="Runnheim R."/>
            <person name="Forrest D."/>
            <person name="Amos-Landgraf J."/>
            <person name="Schwartz D.C."/>
            <person name="Cheng Z."/>
            <person name="Lindblad-Toh K."/>
            <person name="Eichler E.E."/>
            <person name="Ponting C.P."/>
        </authorList>
    </citation>
    <scope>NUCLEOTIDE SEQUENCE [LARGE SCALE GENOMIC DNA]</scope>
    <source>
        <strain>C57BL/6J</strain>
    </source>
</reference>
<reference evidence="6" key="2">
    <citation type="submission" date="2005-07" db="EMBL/GenBank/DDBJ databases">
        <authorList>
            <person name="Mural R.J."/>
            <person name="Adams M.D."/>
            <person name="Myers E.W."/>
            <person name="Smith H.O."/>
            <person name="Venter J.C."/>
        </authorList>
    </citation>
    <scope>NUCLEOTIDE SEQUENCE [LARGE SCALE GENOMIC DNA]</scope>
</reference>
<reference evidence="5" key="3">
    <citation type="journal article" date="2004" name="Genome Res.">
        <title>The status, quality, and expansion of the NIH full-length cDNA project: the Mammalian Gene Collection (MGC).</title>
        <authorList>
            <consortium name="The MGC Project Team"/>
        </authorList>
    </citation>
    <scope>NUCLEOTIDE SEQUENCE [LARGE SCALE MRNA]</scope>
</reference>
<reference evidence="4" key="4">
    <citation type="journal article" date="2013" name="Cell Metab.">
        <title>MTERF1 binds mtDNA to prevent transcriptional interference at the light-strand promoter but is dispensable for rRNA gene transcription regulation.</title>
        <authorList>
            <person name="Terzioglu M."/>
            <person name="Ruzzenente B."/>
            <person name="Harmel J."/>
            <person name="Mourier A."/>
            <person name="Jemt E."/>
            <person name="Lopez M.D."/>
            <person name="Kukat C."/>
            <person name="Stewart J.B."/>
            <person name="Wibom R."/>
            <person name="Meharg C."/>
            <person name="Habermann B."/>
            <person name="Falkenberg M."/>
            <person name="Gustafsson C.M."/>
            <person name="Park C.B."/>
            <person name="Larsson N.G."/>
        </authorList>
    </citation>
    <scope>FUNCTION</scope>
    <scope>TISSUE SPECIFICITY</scope>
    <scope>DISRUPTION PHENOTYPE</scope>
</reference>